<accession>A7I4Y2</accession>
<comment type="catalytic activity">
    <reaction evidence="1">
        <text>tRNA(Arg) + L-arginine + ATP = L-arginyl-tRNA(Arg) + AMP + diphosphate</text>
        <dbReference type="Rhea" id="RHEA:20301"/>
        <dbReference type="Rhea" id="RHEA-COMP:9658"/>
        <dbReference type="Rhea" id="RHEA-COMP:9673"/>
        <dbReference type="ChEBI" id="CHEBI:30616"/>
        <dbReference type="ChEBI" id="CHEBI:32682"/>
        <dbReference type="ChEBI" id="CHEBI:33019"/>
        <dbReference type="ChEBI" id="CHEBI:78442"/>
        <dbReference type="ChEBI" id="CHEBI:78513"/>
        <dbReference type="ChEBI" id="CHEBI:456215"/>
        <dbReference type="EC" id="6.1.1.19"/>
    </reaction>
</comment>
<comment type="subcellular location">
    <subcellularLocation>
        <location evidence="1">Cytoplasm</location>
    </subcellularLocation>
</comment>
<comment type="similarity">
    <text evidence="1">Belongs to the class-I aminoacyl-tRNA synthetase family.</text>
</comment>
<dbReference type="EC" id="6.1.1.19" evidence="1"/>
<dbReference type="EMBL" id="CP000780">
    <property type="protein sequence ID" value="ABS54793.1"/>
    <property type="molecule type" value="Genomic_DNA"/>
</dbReference>
<dbReference type="RefSeq" id="WP_011991281.1">
    <property type="nucleotide sequence ID" value="NC_009712.1"/>
</dbReference>
<dbReference type="SMR" id="A7I4Y2"/>
<dbReference type="STRING" id="456442.Mboo_0271"/>
<dbReference type="GeneID" id="5412224"/>
<dbReference type="KEGG" id="mbn:Mboo_0271"/>
<dbReference type="eggNOG" id="arCOG00487">
    <property type="taxonomic scope" value="Archaea"/>
</dbReference>
<dbReference type="HOGENOM" id="CLU_006406_6_1_2"/>
<dbReference type="OrthoDB" id="372102at2157"/>
<dbReference type="Proteomes" id="UP000002408">
    <property type="component" value="Chromosome"/>
</dbReference>
<dbReference type="GO" id="GO:0005737">
    <property type="term" value="C:cytoplasm"/>
    <property type="evidence" value="ECO:0007669"/>
    <property type="project" value="UniProtKB-SubCell"/>
</dbReference>
<dbReference type="GO" id="GO:0004814">
    <property type="term" value="F:arginine-tRNA ligase activity"/>
    <property type="evidence" value="ECO:0007669"/>
    <property type="project" value="UniProtKB-UniRule"/>
</dbReference>
<dbReference type="GO" id="GO:0005524">
    <property type="term" value="F:ATP binding"/>
    <property type="evidence" value="ECO:0007669"/>
    <property type="project" value="UniProtKB-UniRule"/>
</dbReference>
<dbReference type="GO" id="GO:0006420">
    <property type="term" value="P:arginyl-tRNA aminoacylation"/>
    <property type="evidence" value="ECO:0007669"/>
    <property type="project" value="UniProtKB-UniRule"/>
</dbReference>
<dbReference type="CDD" id="cd00671">
    <property type="entry name" value="ArgRS_core"/>
    <property type="match status" value="1"/>
</dbReference>
<dbReference type="Gene3D" id="3.30.1360.70">
    <property type="entry name" value="Arginyl tRNA synthetase N-terminal domain"/>
    <property type="match status" value="1"/>
</dbReference>
<dbReference type="Gene3D" id="3.40.50.620">
    <property type="entry name" value="HUPs"/>
    <property type="match status" value="1"/>
</dbReference>
<dbReference type="Gene3D" id="1.10.730.10">
    <property type="entry name" value="Isoleucyl-tRNA Synthetase, Domain 1"/>
    <property type="match status" value="1"/>
</dbReference>
<dbReference type="HAMAP" id="MF_00123">
    <property type="entry name" value="Arg_tRNA_synth"/>
    <property type="match status" value="1"/>
</dbReference>
<dbReference type="InterPro" id="IPR001412">
    <property type="entry name" value="aa-tRNA-synth_I_CS"/>
</dbReference>
<dbReference type="InterPro" id="IPR001278">
    <property type="entry name" value="Arg-tRNA-ligase"/>
</dbReference>
<dbReference type="InterPro" id="IPR005148">
    <property type="entry name" value="Arg-tRNA-synth_N"/>
</dbReference>
<dbReference type="InterPro" id="IPR036695">
    <property type="entry name" value="Arg-tRNA-synth_N_sf"/>
</dbReference>
<dbReference type="InterPro" id="IPR035684">
    <property type="entry name" value="ArgRS_core"/>
</dbReference>
<dbReference type="InterPro" id="IPR008909">
    <property type="entry name" value="DALR_anticod-bd"/>
</dbReference>
<dbReference type="InterPro" id="IPR014729">
    <property type="entry name" value="Rossmann-like_a/b/a_fold"/>
</dbReference>
<dbReference type="InterPro" id="IPR009080">
    <property type="entry name" value="tRNAsynth_Ia_anticodon-bd"/>
</dbReference>
<dbReference type="NCBIfam" id="TIGR00456">
    <property type="entry name" value="argS"/>
    <property type="match status" value="1"/>
</dbReference>
<dbReference type="PANTHER" id="PTHR11956:SF5">
    <property type="entry name" value="ARGININE--TRNA LIGASE, CYTOPLASMIC"/>
    <property type="match status" value="1"/>
</dbReference>
<dbReference type="PANTHER" id="PTHR11956">
    <property type="entry name" value="ARGINYL-TRNA SYNTHETASE"/>
    <property type="match status" value="1"/>
</dbReference>
<dbReference type="Pfam" id="PF03485">
    <property type="entry name" value="Arg_tRNA_synt_N"/>
    <property type="match status" value="1"/>
</dbReference>
<dbReference type="Pfam" id="PF05746">
    <property type="entry name" value="DALR_1"/>
    <property type="match status" value="1"/>
</dbReference>
<dbReference type="Pfam" id="PF00750">
    <property type="entry name" value="tRNA-synt_1d"/>
    <property type="match status" value="1"/>
</dbReference>
<dbReference type="PRINTS" id="PR01038">
    <property type="entry name" value="TRNASYNTHARG"/>
</dbReference>
<dbReference type="SMART" id="SM01016">
    <property type="entry name" value="Arg_tRNA_synt_N"/>
    <property type="match status" value="1"/>
</dbReference>
<dbReference type="SMART" id="SM00836">
    <property type="entry name" value="DALR_1"/>
    <property type="match status" value="1"/>
</dbReference>
<dbReference type="SUPFAM" id="SSF47323">
    <property type="entry name" value="Anticodon-binding domain of a subclass of class I aminoacyl-tRNA synthetases"/>
    <property type="match status" value="1"/>
</dbReference>
<dbReference type="SUPFAM" id="SSF55190">
    <property type="entry name" value="Arginyl-tRNA synthetase (ArgRS), N-terminal 'additional' domain"/>
    <property type="match status" value="1"/>
</dbReference>
<dbReference type="SUPFAM" id="SSF52374">
    <property type="entry name" value="Nucleotidylyl transferase"/>
    <property type="match status" value="1"/>
</dbReference>
<dbReference type="PROSITE" id="PS00178">
    <property type="entry name" value="AA_TRNA_LIGASE_I"/>
    <property type="match status" value="1"/>
</dbReference>
<gene>
    <name evidence="1" type="primary">argS</name>
    <name type="ordered locus">Mboo_0271</name>
</gene>
<evidence type="ECO:0000255" key="1">
    <source>
        <dbReference type="HAMAP-Rule" id="MF_00123"/>
    </source>
</evidence>
<name>SYR_METB6</name>
<proteinExistence type="inferred from homology"/>
<feature type="chain" id="PRO_1000018059" description="Arginine--tRNA ligase">
    <location>
        <begin position="1"/>
        <end position="558"/>
    </location>
</feature>
<feature type="short sequence motif" description="'HIGH' region">
    <location>
        <begin position="119"/>
        <end position="129"/>
    </location>
</feature>
<sequence>MVVDTTAAIKRALSECTGLAEIPLVDGGEHADLATTVAFALAKTKKQAPVKIAQDVVAALKNNRELSDLGVTVEAKGPYINFVFGSAYVTAALKAAVQPGYGSFPAKESPRIVLEHTSANPNGPLHVGHIRNSIIGDSLARAFRKAGYPLEVEYYVNDMGRQIAIVTWGFDHLEHGQHESEKEDAHIARVYIAANREIEKDPGITKQVDKLMELVESGDPETVKKFRREVSRCLDGFAVTLKNLNVKHDRFVWESDFVKNGDTKAVIAKIENLPQATHEGTLLALDLAEFGFTNKYVMRRSDGTSVYAARDLAFHTWKNQNFDRAIDVLGADHKLIGAQLQCTMQLLGEKAPEIVHFEFVSLPEGSMSTRAGKFVSADELIDEVTKRAFDEVTTRRPELDEATRRNIADSVARAGIRYDIVKISPEKSTVFDWKQALDFERQSGPYIQYAHARACSILEKAGAFEECYDLATEQEIILAKKIAKFPSVIEKVVTELRPHLLATYAHELADTFNTFYHYEPVLKSEGEVRDRRLTLVKAVQNTLQESLETLGIDAIHTM</sequence>
<organism>
    <name type="scientific">Methanoregula boonei (strain DSM 21154 / JCM 14090 / 6A8)</name>
    <dbReference type="NCBI Taxonomy" id="456442"/>
    <lineage>
        <taxon>Archaea</taxon>
        <taxon>Methanobacteriati</taxon>
        <taxon>Methanobacteriota</taxon>
        <taxon>Stenosarchaea group</taxon>
        <taxon>Methanomicrobia</taxon>
        <taxon>Methanomicrobiales</taxon>
        <taxon>Methanoregulaceae</taxon>
        <taxon>Methanoregula</taxon>
    </lineage>
</organism>
<protein>
    <recommendedName>
        <fullName evidence="1">Arginine--tRNA ligase</fullName>
        <ecNumber evidence="1">6.1.1.19</ecNumber>
    </recommendedName>
    <alternativeName>
        <fullName evidence="1">Arginyl-tRNA synthetase</fullName>
        <shortName evidence="1">ArgRS</shortName>
    </alternativeName>
</protein>
<keyword id="KW-0030">Aminoacyl-tRNA synthetase</keyword>
<keyword id="KW-0067">ATP-binding</keyword>
<keyword id="KW-0963">Cytoplasm</keyword>
<keyword id="KW-0436">Ligase</keyword>
<keyword id="KW-0547">Nucleotide-binding</keyword>
<keyword id="KW-0648">Protein biosynthesis</keyword>
<keyword id="KW-1185">Reference proteome</keyword>
<reference key="1">
    <citation type="journal article" date="2015" name="Microbiology">
        <title>Genome of Methanoregula boonei 6A8 reveals adaptations to oligotrophic peatland environments.</title>
        <authorList>
            <person name="Braeuer S."/>
            <person name="Cadillo-Quiroz H."/>
            <person name="Kyrpides N."/>
            <person name="Woyke T."/>
            <person name="Goodwin L."/>
            <person name="Detter C."/>
            <person name="Podell S."/>
            <person name="Yavitt J.B."/>
            <person name="Zinder S.H."/>
        </authorList>
    </citation>
    <scope>NUCLEOTIDE SEQUENCE [LARGE SCALE GENOMIC DNA]</scope>
    <source>
        <strain>DSM 21154 / JCM 14090 / 6A8</strain>
    </source>
</reference>